<name>GPDA_LEUMM</name>
<feature type="chain" id="PRO_1000049523" description="Glycerol-3-phosphate dehydrogenase [NAD(P)+]">
    <location>
        <begin position="1"/>
        <end position="336"/>
    </location>
</feature>
<feature type="active site" description="Proton acceptor" evidence="1">
    <location>
        <position position="195"/>
    </location>
</feature>
<feature type="binding site" evidence="1">
    <location>
        <position position="11"/>
    </location>
    <ligand>
        <name>NADPH</name>
        <dbReference type="ChEBI" id="CHEBI:57783"/>
    </ligand>
</feature>
<feature type="binding site" evidence="1">
    <location>
        <position position="12"/>
    </location>
    <ligand>
        <name>NADPH</name>
        <dbReference type="ChEBI" id="CHEBI:57783"/>
    </ligand>
</feature>
<feature type="binding site" evidence="1">
    <location>
        <position position="32"/>
    </location>
    <ligand>
        <name>NADPH</name>
        <dbReference type="ChEBI" id="CHEBI:57783"/>
    </ligand>
</feature>
<feature type="binding site" evidence="1">
    <location>
        <position position="109"/>
    </location>
    <ligand>
        <name>NADPH</name>
        <dbReference type="ChEBI" id="CHEBI:57783"/>
    </ligand>
</feature>
<feature type="binding site" evidence="1">
    <location>
        <position position="109"/>
    </location>
    <ligand>
        <name>sn-glycerol 3-phosphate</name>
        <dbReference type="ChEBI" id="CHEBI:57597"/>
    </ligand>
</feature>
<feature type="binding site" evidence="1">
    <location>
        <position position="140"/>
    </location>
    <ligand>
        <name>sn-glycerol 3-phosphate</name>
        <dbReference type="ChEBI" id="CHEBI:57597"/>
    </ligand>
</feature>
<feature type="binding site" evidence="1">
    <location>
        <position position="142"/>
    </location>
    <ligand>
        <name>sn-glycerol 3-phosphate</name>
        <dbReference type="ChEBI" id="CHEBI:57597"/>
    </ligand>
</feature>
<feature type="binding site" evidence="1">
    <location>
        <position position="144"/>
    </location>
    <ligand>
        <name>NADPH</name>
        <dbReference type="ChEBI" id="CHEBI:57783"/>
    </ligand>
</feature>
<feature type="binding site" evidence="1">
    <location>
        <position position="195"/>
    </location>
    <ligand>
        <name>sn-glycerol 3-phosphate</name>
        <dbReference type="ChEBI" id="CHEBI:57597"/>
    </ligand>
</feature>
<feature type="binding site" evidence="1">
    <location>
        <position position="248"/>
    </location>
    <ligand>
        <name>sn-glycerol 3-phosphate</name>
        <dbReference type="ChEBI" id="CHEBI:57597"/>
    </ligand>
</feature>
<feature type="binding site" evidence="1">
    <location>
        <position position="258"/>
    </location>
    <ligand>
        <name>sn-glycerol 3-phosphate</name>
        <dbReference type="ChEBI" id="CHEBI:57597"/>
    </ligand>
</feature>
<feature type="binding site" evidence="1">
    <location>
        <position position="259"/>
    </location>
    <ligand>
        <name>NADPH</name>
        <dbReference type="ChEBI" id="CHEBI:57783"/>
    </ligand>
</feature>
<feature type="binding site" evidence="1">
    <location>
        <position position="259"/>
    </location>
    <ligand>
        <name>sn-glycerol 3-phosphate</name>
        <dbReference type="ChEBI" id="CHEBI:57597"/>
    </ligand>
</feature>
<feature type="binding site" evidence="1">
    <location>
        <position position="260"/>
    </location>
    <ligand>
        <name>sn-glycerol 3-phosphate</name>
        <dbReference type="ChEBI" id="CHEBI:57597"/>
    </ligand>
</feature>
<feature type="binding site" evidence="1">
    <location>
        <position position="283"/>
    </location>
    <ligand>
        <name>NADPH</name>
        <dbReference type="ChEBI" id="CHEBI:57783"/>
    </ligand>
</feature>
<feature type="binding site" evidence="1">
    <location>
        <position position="285"/>
    </location>
    <ligand>
        <name>NADPH</name>
        <dbReference type="ChEBI" id="CHEBI:57783"/>
    </ligand>
</feature>
<accession>Q03YL0</accession>
<keyword id="KW-0963">Cytoplasm</keyword>
<keyword id="KW-0444">Lipid biosynthesis</keyword>
<keyword id="KW-0443">Lipid metabolism</keyword>
<keyword id="KW-0520">NAD</keyword>
<keyword id="KW-0521">NADP</keyword>
<keyword id="KW-0547">Nucleotide-binding</keyword>
<keyword id="KW-0560">Oxidoreductase</keyword>
<keyword id="KW-0594">Phospholipid biosynthesis</keyword>
<keyword id="KW-1208">Phospholipid metabolism</keyword>
<keyword id="KW-1185">Reference proteome</keyword>
<evidence type="ECO:0000255" key="1">
    <source>
        <dbReference type="HAMAP-Rule" id="MF_00394"/>
    </source>
</evidence>
<protein>
    <recommendedName>
        <fullName evidence="1">Glycerol-3-phosphate dehydrogenase [NAD(P)+]</fullName>
        <ecNumber evidence="1">1.1.1.94</ecNumber>
    </recommendedName>
    <alternativeName>
        <fullName evidence="1">NAD(P)(+)-dependent glycerol-3-phosphate dehydrogenase</fullName>
    </alternativeName>
    <alternativeName>
        <fullName evidence="1">NAD(P)H-dependent dihydroxyacetone-phosphate reductase</fullName>
    </alternativeName>
</protein>
<proteinExistence type="inferred from homology"/>
<gene>
    <name evidence="1" type="primary">gpsA</name>
    <name type="ordered locus">LEUM_0598</name>
</gene>
<comment type="function">
    <text evidence="1">Catalyzes the reduction of the glycolytic intermediate dihydroxyacetone phosphate (DHAP) to sn-glycerol 3-phosphate (G3P), the key precursor for phospholipid synthesis.</text>
</comment>
<comment type="catalytic activity">
    <reaction evidence="1">
        <text>sn-glycerol 3-phosphate + NAD(+) = dihydroxyacetone phosphate + NADH + H(+)</text>
        <dbReference type="Rhea" id="RHEA:11092"/>
        <dbReference type="ChEBI" id="CHEBI:15378"/>
        <dbReference type="ChEBI" id="CHEBI:57540"/>
        <dbReference type="ChEBI" id="CHEBI:57597"/>
        <dbReference type="ChEBI" id="CHEBI:57642"/>
        <dbReference type="ChEBI" id="CHEBI:57945"/>
        <dbReference type="EC" id="1.1.1.94"/>
    </reaction>
    <physiologicalReaction direction="right-to-left" evidence="1">
        <dbReference type="Rhea" id="RHEA:11094"/>
    </physiologicalReaction>
</comment>
<comment type="catalytic activity">
    <reaction evidence="1">
        <text>sn-glycerol 3-phosphate + NADP(+) = dihydroxyacetone phosphate + NADPH + H(+)</text>
        <dbReference type="Rhea" id="RHEA:11096"/>
        <dbReference type="ChEBI" id="CHEBI:15378"/>
        <dbReference type="ChEBI" id="CHEBI:57597"/>
        <dbReference type="ChEBI" id="CHEBI:57642"/>
        <dbReference type="ChEBI" id="CHEBI:57783"/>
        <dbReference type="ChEBI" id="CHEBI:58349"/>
        <dbReference type="EC" id="1.1.1.94"/>
    </reaction>
    <physiologicalReaction direction="right-to-left" evidence="1">
        <dbReference type="Rhea" id="RHEA:11098"/>
    </physiologicalReaction>
</comment>
<comment type="pathway">
    <text evidence="1">Membrane lipid metabolism; glycerophospholipid metabolism.</text>
</comment>
<comment type="subcellular location">
    <subcellularLocation>
        <location evidence="1">Cytoplasm</location>
    </subcellularLocation>
</comment>
<comment type="similarity">
    <text evidence="1">Belongs to the NAD-dependent glycerol-3-phosphate dehydrogenase family.</text>
</comment>
<organism>
    <name type="scientific">Leuconostoc mesenteroides subsp. mesenteroides (strain ATCC 8293 / DSM 20343 / BCRC 11652 / CCM 1803 / JCM 6124 / NCDO 523 / NBRC 100496 / NCIMB 8023 / NCTC 12954 / NRRL B-1118 / 37Y)</name>
    <dbReference type="NCBI Taxonomy" id="203120"/>
    <lineage>
        <taxon>Bacteria</taxon>
        <taxon>Bacillati</taxon>
        <taxon>Bacillota</taxon>
        <taxon>Bacilli</taxon>
        <taxon>Lactobacillales</taxon>
        <taxon>Lactobacillaceae</taxon>
        <taxon>Leuconostoc</taxon>
    </lineage>
</organism>
<sequence>MTKIAVLGGGSWGTALANVAAENNNDVRLWTRTATQADEINSQHTNQKYLPDAKLSSELMATSNMALAVMDAEIVLTVVPTKVVREVARQLADVLNKQDHQVILAHATKGLEQVTYKRVSEMLAEEVPAKYRSTLAMISGPSHAEDVIKHDLTSVSIASENEEAAKLLQQVFANSSFRPYTNHDLLGSELAAALKNIIAIGSGALIGLGYGANAQAALLTRGLSEMRALGQAMGAQPETFLGLAGIGDLIVTGMSPNSRNYRAGKQLGEGKSLQEIQDDMGMVIEGVSTTKAVYEFSQHHHVEMPITAGIYRILYENEPLRDVISDLMSRPLRSED</sequence>
<dbReference type="EC" id="1.1.1.94" evidence="1"/>
<dbReference type="EMBL" id="CP000414">
    <property type="protein sequence ID" value="ABJ61712.1"/>
    <property type="molecule type" value="Genomic_DNA"/>
</dbReference>
<dbReference type="RefSeq" id="WP_011679415.1">
    <property type="nucleotide sequence ID" value="NC_008531.1"/>
</dbReference>
<dbReference type="SMR" id="Q03YL0"/>
<dbReference type="EnsemblBacteria" id="ABJ61712">
    <property type="protein sequence ID" value="ABJ61712"/>
    <property type="gene ID" value="LEUM_0598"/>
</dbReference>
<dbReference type="GeneID" id="29576592"/>
<dbReference type="KEGG" id="lme:LEUM_0598"/>
<dbReference type="eggNOG" id="COG0240">
    <property type="taxonomic scope" value="Bacteria"/>
</dbReference>
<dbReference type="HOGENOM" id="CLU_033449_0_2_9"/>
<dbReference type="UniPathway" id="UPA00940"/>
<dbReference type="Proteomes" id="UP000000362">
    <property type="component" value="Chromosome"/>
</dbReference>
<dbReference type="GO" id="GO:0005829">
    <property type="term" value="C:cytosol"/>
    <property type="evidence" value="ECO:0007669"/>
    <property type="project" value="TreeGrafter"/>
</dbReference>
<dbReference type="GO" id="GO:0047952">
    <property type="term" value="F:glycerol-3-phosphate dehydrogenase [NAD(P)+] activity"/>
    <property type="evidence" value="ECO:0007669"/>
    <property type="project" value="UniProtKB-UniRule"/>
</dbReference>
<dbReference type="GO" id="GO:0051287">
    <property type="term" value="F:NAD binding"/>
    <property type="evidence" value="ECO:0007669"/>
    <property type="project" value="InterPro"/>
</dbReference>
<dbReference type="GO" id="GO:0005975">
    <property type="term" value="P:carbohydrate metabolic process"/>
    <property type="evidence" value="ECO:0007669"/>
    <property type="project" value="InterPro"/>
</dbReference>
<dbReference type="GO" id="GO:0046167">
    <property type="term" value="P:glycerol-3-phosphate biosynthetic process"/>
    <property type="evidence" value="ECO:0007669"/>
    <property type="project" value="UniProtKB-UniRule"/>
</dbReference>
<dbReference type="GO" id="GO:0046168">
    <property type="term" value="P:glycerol-3-phosphate catabolic process"/>
    <property type="evidence" value="ECO:0007669"/>
    <property type="project" value="InterPro"/>
</dbReference>
<dbReference type="GO" id="GO:0006650">
    <property type="term" value="P:glycerophospholipid metabolic process"/>
    <property type="evidence" value="ECO:0007669"/>
    <property type="project" value="UniProtKB-UniRule"/>
</dbReference>
<dbReference type="GO" id="GO:0008654">
    <property type="term" value="P:phospholipid biosynthetic process"/>
    <property type="evidence" value="ECO:0007669"/>
    <property type="project" value="UniProtKB-KW"/>
</dbReference>
<dbReference type="FunFam" id="1.10.1040.10:FF:000001">
    <property type="entry name" value="Glycerol-3-phosphate dehydrogenase [NAD(P)+]"/>
    <property type="match status" value="1"/>
</dbReference>
<dbReference type="FunFam" id="3.40.50.720:FF:000019">
    <property type="entry name" value="Glycerol-3-phosphate dehydrogenase [NAD(P)+]"/>
    <property type="match status" value="1"/>
</dbReference>
<dbReference type="Gene3D" id="1.10.1040.10">
    <property type="entry name" value="N-(1-d-carboxylethyl)-l-norvaline Dehydrogenase, domain 2"/>
    <property type="match status" value="1"/>
</dbReference>
<dbReference type="Gene3D" id="3.40.50.720">
    <property type="entry name" value="NAD(P)-binding Rossmann-like Domain"/>
    <property type="match status" value="1"/>
</dbReference>
<dbReference type="HAMAP" id="MF_00394">
    <property type="entry name" value="NAD_Glyc3P_dehydrog"/>
    <property type="match status" value="1"/>
</dbReference>
<dbReference type="InterPro" id="IPR008927">
    <property type="entry name" value="6-PGluconate_DH-like_C_sf"/>
</dbReference>
<dbReference type="InterPro" id="IPR013328">
    <property type="entry name" value="6PGD_dom2"/>
</dbReference>
<dbReference type="InterPro" id="IPR006168">
    <property type="entry name" value="G3P_DH_NAD-dep"/>
</dbReference>
<dbReference type="InterPro" id="IPR006109">
    <property type="entry name" value="G3P_DH_NAD-dep_C"/>
</dbReference>
<dbReference type="InterPro" id="IPR011128">
    <property type="entry name" value="G3P_DH_NAD-dep_N"/>
</dbReference>
<dbReference type="InterPro" id="IPR036291">
    <property type="entry name" value="NAD(P)-bd_dom_sf"/>
</dbReference>
<dbReference type="NCBIfam" id="NF000940">
    <property type="entry name" value="PRK00094.1-2"/>
    <property type="match status" value="1"/>
</dbReference>
<dbReference type="NCBIfam" id="NF000941">
    <property type="entry name" value="PRK00094.1-3"/>
    <property type="match status" value="1"/>
</dbReference>
<dbReference type="NCBIfam" id="NF000942">
    <property type="entry name" value="PRK00094.1-4"/>
    <property type="match status" value="1"/>
</dbReference>
<dbReference type="PANTHER" id="PTHR11728">
    <property type="entry name" value="GLYCEROL-3-PHOSPHATE DEHYDROGENASE"/>
    <property type="match status" value="1"/>
</dbReference>
<dbReference type="PANTHER" id="PTHR11728:SF1">
    <property type="entry name" value="GLYCEROL-3-PHOSPHATE DEHYDROGENASE [NAD(+)] 2, CHLOROPLASTIC"/>
    <property type="match status" value="1"/>
</dbReference>
<dbReference type="Pfam" id="PF07479">
    <property type="entry name" value="NAD_Gly3P_dh_C"/>
    <property type="match status" value="1"/>
</dbReference>
<dbReference type="Pfam" id="PF01210">
    <property type="entry name" value="NAD_Gly3P_dh_N"/>
    <property type="match status" value="1"/>
</dbReference>
<dbReference type="PIRSF" id="PIRSF000114">
    <property type="entry name" value="Glycerol-3-P_dh"/>
    <property type="match status" value="1"/>
</dbReference>
<dbReference type="PRINTS" id="PR00077">
    <property type="entry name" value="GPDHDRGNASE"/>
</dbReference>
<dbReference type="SUPFAM" id="SSF48179">
    <property type="entry name" value="6-phosphogluconate dehydrogenase C-terminal domain-like"/>
    <property type="match status" value="1"/>
</dbReference>
<dbReference type="SUPFAM" id="SSF51735">
    <property type="entry name" value="NAD(P)-binding Rossmann-fold domains"/>
    <property type="match status" value="1"/>
</dbReference>
<dbReference type="PROSITE" id="PS00957">
    <property type="entry name" value="NAD_G3PDH"/>
    <property type="match status" value="1"/>
</dbReference>
<reference key="1">
    <citation type="journal article" date="2006" name="Proc. Natl. Acad. Sci. U.S.A.">
        <title>Comparative genomics of the lactic acid bacteria.</title>
        <authorList>
            <person name="Makarova K.S."/>
            <person name="Slesarev A."/>
            <person name="Wolf Y.I."/>
            <person name="Sorokin A."/>
            <person name="Mirkin B."/>
            <person name="Koonin E.V."/>
            <person name="Pavlov A."/>
            <person name="Pavlova N."/>
            <person name="Karamychev V."/>
            <person name="Polouchine N."/>
            <person name="Shakhova V."/>
            <person name="Grigoriev I."/>
            <person name="Lou Y."/>
            <person name="Rohksar D."/>
            <person name="Lucas S."/>
            <person name="Huang K."/>
            <person name="Goodstein D.M."/>
            <person name="Hawkins T."/>
            <person name="Plengvidhya V."/>
            <person name="Welker D."/>
            <person name="Hughes J."/>
            <person name="Goh Y."/>
            <person name="Benson A."/>
            <person name="Baldwin K."/>
            <person name="Lee J.-H."/>
            <person name="Diaz-Muniz I."/>
            <person name="Dosti B."/>
            <person name="Smeianov V."/>
            <person name="Wechter W."/>
            <person name="Barabote R."/>
            <person name="Lorca G."/>
            <person name="Altermann E."/>
            <person name="Barrangou R."/>
            <person name="Ganesan B."/>
            <person name="Xie Y."/>
            <person name="Rawsthorne H."/>
            <person name="Tamir D."/>
            <person name="Parker C."/>
            <person name="Breidt F."/>
            <person name="Broadbent J.R."/>
            <person name="Hutkins R."/>
            <person name="O'Sullivan D."/>
            <person name="Steele J."/>
            <person name="Unlu G."/>
            <person name="Saier M.H. Jr."/>
            <person name="Klaenhammer T."/>
            <person name="Richardson P."/>
            <person name="Kozyavkin S."/>
            <person name="Weimer B.C."/>
            <person name="Mills D.A."/>
        </authorList>
    </citation>
    <scope>NUCLEOTIDE SEQUENCE [LARGE SCALE GENOMIC DNA]</scope>
    <source>
        <strain>ATCC 8293 / DSM 20343 / BCRC 11652 / CCM 1803 / JCM 6124 / NCDO 523 / NBRC 100496 / NCIMB 8023 / NCTC 12954 / NRRL B-1118 / 37Y</strain>
    </source>
</reference>